<comment type="function">
    <text evidence="1">Catalyzes a salvage reaction resulting in the formation of AMP, that is energically less costly than de novo synthesis.</text>
</comment>
<comment type="catalytic activity">
    <reaction evidence="1">
        <text>AMP + diphosphate = 5-phospho-alpha-D-ribose 1-diphosphate + adenine</text>
        <dbReference type="Rhea" id="RHEA:16609"/>
        <dbReference type="ChEBI" id="CHEBI:16708"/>
        <dbReference type="ChEBI" id="CHEBI:33019"/>
        <dbReference type="ChEBI" id="CHEBI:58017"/>
        <dbReference type="ChEBI" id="CHEBI:456215"/>
        <dbReference type="EC" id="2.4.2.7"/>
    </reaction>
</comment>
<comment type="pathway">
    <text evidence="1">Purine metabolism; AMP biosynthesis via salvage pathway; AMP from adenine: step 1/1.</text>
</comment>
<comment type="subunit">
    <text evidence="1">Homodimer.</text>
</comment>
<comment type="subcellular location">
    <subcellularLocation>
        <location evidence="1">Cytoplasm</location>
    </subcellularLocation>
</comment>
<comment type="similarity">
    <text evidence="1">Belongs to the purine/pyrimidine phosphoribosyltransferase family.</text>
</comment>
<dbReference type="EC" id="2.4.2.7" evidence="1"/>
<dbReference type="EMBL" id="BX950851">
    <property type="protein sequence ID" value="CAG74085.1"/>
    <property type="molecule type" value="Genomic_DNA"/>
</dbReference>
<dbReference type="RefSeq" id="WP_011092766.1">
    <property type="nucleotide sequence ID" value="NC_004547.2"/>
</dbReference>
<dbReference type="SMR" id="Q6D800"/>
<dbReference type="STRING" id="218491.ECA1175"/>
<dbReference type="GeneID" id="57207987"/>
<dbReference type="KEGG" id="eca:ECA1175"/>
<dbReference type="PATRIC" id="fig|218491.5.peg.1190"/>
<dbReference type="eggNOG" id="COG0503">
    <property type="taxonomic scope" value="Bacteria"/>
</dbReference>
<dbReference type="HOGENOM" id="CLU_063339_3_0_6"/>
<dbReference type="OrthoDB" id="9803963at2"/>
<dbReference type="UniPathway" id="UPA00588">
    <property type="reaction ID" value="UER00646"/>
</dbReference>
<dbReference type="Proteomes" id="UP000007966">
    <property type="component" value="Chromosome"/>
</dbReference>
<dbReference type="GO" id="GO:0005737">
    <property type="term" value="C:cytoplasm"/>
    <property type="evidence" value="ECO:0007669"/>
    <property type="project" value="UniProtKB-SubCell"/>
</dbReference>
<dbReference type="GO" id="GO:0002055">
    <property type="term" value="F:adenine binding"/>
    <property type="evidence" value="ECO:0007669"/>
    <property type="project" value="TreeGrafter"/>
</dbReference>
<dbReference type="GO" id="GO:0003999">
    <property type="term" value="F:adenine phosphoribosyltransferase activity"/>
    <property type="evidence" value="ECO:0007669"/>
    <property type="project" value="UniProtKB-UniRule"/>
</dbReference>
<dbReference type="GO" id="GO:0016208">
    <property type="term" value="F:AMP binding"/>
    <property type="evidence" value="ECO:0007669"/>
    <property type="project" value="TreeGrafter"/>
</dbReference>
<dbReference type="GO" id="GO:0006168">
    <property type="term" value="P:adenine salvage"/>
    <property type="evidence" value="ECO:0007669"/>
    <property type="project" value="InterPro"/>
</dbReference>
<dbReference type="GO" id="GO:0044209">
    <property type="term" value="P:AMP salvage"/>
    <property type="evidence" value="ECO:0007669"/>
    <property type="project" value="UniProtKB-UniRule"/>
</dbReference>
<dbReference type="GO" id="GO:0006166">
    <property type="term" value="P:purine ribonucleoside salvage"/>
    <property type="evidence" value="ECO:0007669"/>
    <property type="project" value="UniProtKB-KW"/>
</dbReference>
<dbReference type="CDD" id="cd06223">
    <property type="entry name" value="PRTases_typeI"/>
    <property type="match status" value="1"/>
</dbReference>
<dbReference type="FunFam" id="3.40.50.2020:FF:000004">
    <property type="entry name" value="Adenine phosphoribosyltransferase"/>
    <property type="match status" value="1"/>
</dbReference>
<dbReference type="Gene3D" id="3.40.50.2020">
    <property type="match status" value="1"/>
</dbReference>
<dbReference type="HAMAP" id="MF_00004">
    <property type="entry name" value="Aden_phosphoribosyltr"/>
    <property type="match status" value="1"/>
</dbReference>
<dbReference type="InterPro" id="IPR005764">
    <property type="entry name" value="Ade_phspho_trans"/>
</dbReference>
<dbReference type="InterPro" id="IPR000836">
    <property type="entry name" value="PRibTrfase_dom"/>
</dbReference>
<dbReference type="InterPro" id="IPR029057">
    <property type="entry name" value="PRTase-like"/>
</dbReference>
<dbReference type="InterPro" id="IPR050054">
    <property type="entry name" value="UPRTase/APRTase"/>
</dbReference>
<dbReference type="NCBIfam" id="TIGR01090">
    <property type="entry name" value="apt"/>
    <property type="match status" value="1"/>
</dbReference>
<dbReference type="NCBIfam" id="NF002632">
    <property type="entry name" value="PRK02304.1-1"/>
    <property type="match status" value="1"/>
</dbReference>
<dbReference type="NCBIfam" id="NF002634">
    <property type="entry name" value="PRK02304.1-3"/>
    <property type="match status" value="1"/>
</dbReference>
<dbReference type="NCBIfam" id="NF002636">
    <property type="entry name" value="PRK02304.1-5"/>
    <property type="match status" value="1"/>
</dbReference>
<dbReference type="PANTHER" id="PTHR32315">
    <property type="entry name" value="ADENINE PHOSPHORIBOSYLTRANSFERASE"/>
    <property type="match status" value="1"/>
</dbReference>
<dbReference type="PANTHER" id="PTHR32315:SF3">
    <property type="entry name" value="ADENINE PHOSPHORIBOSYLTRANSFERASE"/>
    <property type="match status" value="1"/>
</dbReference>
<dbReference type="Pfam" id="PF00156">
    <property type="entry name" value="Pribosyltran"/>
    <property type="match status" value="1"/>
</dbReference>
<dbReference type="SUPFAM" id="SSF53271">
    <property type="entry name" value="PRTase-like"/>
    <property type="match status" value="1"/>
</dbReference>
<dbReference type="PROSITE" id="PS00103">
    <property type="entry name" value="PUR_PYR_PR_TRANSFER"/>
    <property type="match status" value="1"/>
</dbReference>
<accession>Q6D800</accession>
<proteinExistence type="inferred from homology"/>
<reference key="1">
    <citation type="journal article" date="2004" name="Proc. Natl. Acad. Sci. U.S.A.">
        <title>Genome sequence of the enterobacterial phytopathogen Erwinia carotovora subsp. atroseptica and characterization of virulence factors.</title>
        <authorList>
            <person name="Bell K.S."/>
            <person name="Sebaihia M."/>
            <person name="Pritchard L."/>
            <person name="Holden M.T.G."/>
            <person name="Hyman L.J."/>
            <person name="Holeva M.C."/>
            <person name="Thomson N.R."/>
            <person name="Bentley S.D."/>
            <person name="Churcher L.J.C."/>
            <person name="Mungall K."/>
            <person name="Atkin R."/>
            <person name="Bason N."/>
            <person name="Brooks K."/>
            <person name="Chillingworth T."/>
            <person name="Clark K."/>
            <person name="Doggett J."/>
            <person name="Fraser A."/>
            <person name="Hance Z."/>
            <person name="Hauser H."/>
            <person name="Jagels K."/>
            <person name="Moule S."/>
            <person name="Norbertczak H."/>
            <person name="Ormond D."/>
            <person name="Price C."/>
            <person name="Quail M.A."/>
            <person name="Sanders M."/>
            <person name="Walker D."/>
            <person name="Whitehead S."/>
            <person name="Salmond G.P.C."/>
            <person name="Birch P.R.J."/>
            <person name="Parkhill J."/>
            <person name="Toth I.K."/>
        </authorList>
    </citation>
    <scope>NUCLEOTIDE SEQUENCE [LARGE SCALE GENOMIC DNA]</scope>
    <source>
        <strain>SCRI 1043 / ATCC BAA-672</strain>
    </source>
</reference>
<protein>
    <recommendedName>
        <fullName evidence="1">Adenine phosphoribosyltransferase</fullName>
        <shortName evidence="1">APRT</shortName>
        <ecNumber evidence="1">2.4.2.7</ecNumber>
    </recommendedName>
</protein>
<feature type="chain" id="PRO_0000149383" description="Adenine phosphoribosyltransferase">
    <location>
        <begin position="1"/>
        <end position="185"/>
    </location>
</feature>
<organism>
    <name type="scientific">Pectobacterium atrosepticum (strain SCRI 1043 / ATCC BAA-672)</name>
    <name type="common">Erwinia carotovora subsp. atroseptica</name>
    <dbReference type="NCBI Taxonomy" id="218491"/>
    <lineage>
        <taxon>Bacteria</taxon>
        <taxon>Pseudomonadati</taxon>
        <taxon>Pseudomonadota</taxon>
        <taxon>Gammaproteobacteria</taxon>
        <taxon>Enterobacterales</taxon>
        <taxon>Pectobacteriaceae</taxon>
        <taxon>Pectobacterium</taxon>
    </lineage>
</organism>
<sequence length="185" mass="19798">MTTVTAQQQAELIKNSIKSIPDYPKPGILFRDVTSLLEDPVAYAASIDMLANRYRNTGVTKVVGTEARGFLFGAPVALALGVGFVPVRKPGKLPRPTISESYELEYGSDTLEIHADAISAGDNVLVIDDLLATGGTLEATVKLIRRLGGTVNDAAFIINLFDLGGEQRLTEMGVTCYSLVDFPGH</sequence>
<gene>
    <name evidence="1" type="primary">apt</name>
    <name type="ordered locus">ECA1175</name>
</gene>
<name>APT_PECAS</name>
<keyword id="KW-0963">Cytoplasm</keyword>
<keyword id="KW-0328">Glycosyltransferase</keyword>
<keyword id="KW-0660">Purine salvage</keyword>
<keyword id="KW-1185">Reference proteome</keyword>
<keyword id="KW-0808">Transferase</keyword>
<evidence type="ECO:0000255" key="1">
    <source>
        <dbReference type="HAMAP-Rule" id="MF_00004"/>
    </source>
</evidence>